<organism>
    <name type="scientific">Tolumonas auensis (strain DSM 9187 / NBRC 110442 / TA 4)</name>
    <dbReference type="NCBI Taxonomy" id="595494"/>
    <lineage>
        <taxon>Bacteria</taxon>
        <taxon>Pseudomonadati</taxon>
        <taxon>Pseudomonadota</taxon>
        <taxon>Gammaproteobacteria</taxon>
        <taxon>Aeromonadales</taxon>
        <taxon>Aeromonadaceae</taxon>
        <taxon>Tolumonas</taxon>
    </lineage>
</organism>
<comment type="function">
    <text evidence="1">Excises uracil residues from the DNA which can arise as a result of misincorporation of dUMP residues by DNA polymerase or due to deamination of cytosine.</text>
</comment>
<comment type="catalytic activity">
    <reaction evidence="1">
        <text>Hydrolyzes single-stranded DNA or mismatched double-stranded DNA and polynucleotides, releasing free uracil.</text>
        <dbReference type="EC" id="3.2.2.27"/>
    </reaction>
</comment>
<comment type="subcellular location">
    <subcellularLocation>
        <location evidence="1">Cytoplasm</location>
    </subcellularLocation>
</comment>
<comment type="similarity">
    <text evidence="1">Belongs to the uracil-DNA glycosylase (UDG) superfamily. UNG family.</text>
</comment>
<gene>
    <name evidence="1" type="primary">ung</name>
    <name type="ordered locus">Tola_0895</name>
</gene>
<feature type="chain" id="PRO_1000203381" description="Uracil-DNA glycosylase">
    <location>
        <begin position="1"/>
        <end position="223"/>
    </location>
</feature>
<feature type="active site" description="Proton acceptor" evidence="1">
    <location>
        <position position="61"/>
    </location>
</feature>
<accession>C4LC44</accession>
<keyword id="KW-0963">Cytoplasm</keyword>
<keyword id="KW-0227">DNA damage</keyword>
<keyword id="KW-0234">DNA repair</keyword>
<keyword id="KW-0378">Hydrolase</keyword>
<keyword id="KW-1185">Reference proteome</keyword>
<dbReference type="EC" id="3.2.2.27" evidence="1"/>
<dbReference type="EMBL" id="CP001616">
    <property type="protein sequence ID" value="ACQ92523.1"/>
    <property type="molecule type" value="Genomic_DNA"/>
</dbReference>
<dbReference type="RefSeq" id="WP_012729122.1">
    <property type="nucleotide sequence ID" value="NC_012691.1"/>
</dbReference>
<dbReference type="SMR" id="C4LC44"/>
<dbReference type="STRING" id="595494.Tola_0895"/>
<dbReference type="KEGG" id="tau:Tola_0895"/>
<dbReference type="eggNOG" id="COG0692">
    <property type="taxonomic scope" value="Bacteria"/>
</dbReference>
<dbReference type="HOGENOM" id="CLU_032162_3_1_6"/>
<dbReference type="OrthoDB" id="9804372at2"/>
<dbReference type="Proteomes" id="UP000009073">
    <property type="component" value="Chromosome"/>
</dbReference>
<dbReference type="GO" id="GO:0005737">
    <property type="term" value="C:cytoplasm"/>
    <property type="evidence" value="ECO:0007669"/>
    <property type="project" value="UniProtKB-SubCell"/>
</dbReference>
<dbReference type="GO" id="GO:0004844">
    <property type="term" value="F:uracil DNA N-glycosylase activity"/>
    <property type="evidence" value="ECO:0007669"/>
    <property type="project" value="UniProtKB-UniRule"/>
</dbReference>
<dbReference type="GO" id="GO:0097510">
    <property type="term" value="P:base-excision repair, AP site formation via deaminated base removal"/>
    <property type="evidence" value="ECO:0007669"/>
    <property type="project" value="TreeGrafter"/>
</dbReference>
<dbReference type="CDD" id="cd10027">
    <property type="entry name" value="UDG-F1-like"/>
    <property type="match status" value="1"/>
</dbReference>
<dbReference type="FunFam" id="3.40.470.10:FF:000001">
    <property type="entry name" value="Uracil-DNA glycosylase"/>
    <property type="match status" value="1"/>
</dbReference>
<dbReference type="Gene3D" id="3.40.470.10">
    <property type="entry name" value="Uracil-DNA glycosylase-like domain"/>
    <property type="match status" value="1"/>
</dbReference>
<dbReference type="HAMAP" id="MF_00148">
    <property type="entry name" value="UDG"/>
    <property type="match status" value="1"/>
</dbReference>
<dbReference type="InterPro" id="IPR002043">
    <property type="entry name" value="UDG_fam1"/>
</dbReference>
<dbReference type="InterPro" id="IPR018085">
    <property type="entry name" value="Ura-DNA_Glyclase_AS"/>
</dbReference>
<dbReference type="InterPro" id="IPR005122">
    <property type="entry name" value="Uracil-DNA_glycosylase-like"/>
</dbReference>
<dbReference type="InterPro" id="IPR036895">
    <property type="entry name" value="Uracil-DNA_glycosylase-like_sf"/>
</dbReference>
<dbReference type="NCBIfam" id="NF003588">
    <property type="entry name" value="PRK05254.1-1"/>
    <property type="match status" value="1"/>
</dbReference>
<dbReference type="NCBIfam" id="NF003589">
    <property type="entry name" value="PRK05254.1-2"/>
    <property type="match status" value="1"/>
</dbReference>
<dbReference type="NCBIfam" id="NF003591">
    <property type="entry name" value="PRK05254.1-4"/>
    <property type="match status" value="1"/>
</dbReference>
<dbReference type="NCBIfam" id="NF003592">
    <property type="entry name" value="PRK05254.1-5"/>
    <property type="match status" value="1"/>
</dbReference>
<dbReference type="NCBIfam" id="TIGR00628">
    <property type="entry name" value="ung"/>
    <property type="match status" value="1"/>
</dbReference>
<dbReference type="PANTHER" id="PTHR11264">
    <property type="entry name" value="URACIL-DNA GLYCOSYLASE"/>
    <property type="match status" value="1"/>
</dbReference>
<dbReference type="PANTHER" id="PTHR11264:SF0">
    <property type="entry name" value="URACIL-DNA GLYCOSYLASE"/>
    <property type="match status" value="1"/>
</dbReference>
<dbReference type="Pfam" id="PF03167">
    <property type="entry name" value="UDG"/>
    <property type="match status" value="1"/>
</dbReference>
<dbReference type="SMART" id="SM00986">
    <property type="entry name" value="UDG"/>
    <property type="match status" value="1"/>
</dbReference>
<dbReference type="SMART" id="SM00987">
    <property type="entry name" value="UreE_C"/>
    <property type="match status" value="1"/>
</dbReference>
<dbReference type="SUPFAM" id="SSF52141">
    <property type="entry name" value="Uracil-DNA glycosylase-like"/>
    <property type="match status" value="1"/>
</dbReference>
<dbReference type="PROSITE" id="PS00130">
    <property type="entry name" value="U_DNA_GLYCOSYLASE"/>
    <property type="match status" value="1"/>
</dbReference>
<sequence length="223" mass="25068">MQTWSDVLGQEKKQAYFQETMDFVRREREAGKIVYPPAADVFNAFKYTEFADVKVVILGQDPYHGPNQAHGLCFSVLPGVAVPPSLVNIYKELHRDIPGFEIPSHGYLLSWAQQGVLLLNTVLTVEAGKAHSHASSGWEHFTDRVIAALNEHREGLVFLLWGNHAQKKGQYIDRQRHHVLMAPHPSPLSAHRGFLGCGHFSQTNQFLTDADKQPINWQIAPIA</sequence>
<protein>
    <recommendedName>
        <fullName evidence="1">Uracil-DNA glycosylase</fullName>
        <shortName evidence="1">UDG</shortName>
        <ecNumber evidence="1">3.2.2.27</ecNumber>
    </recommendedName>
</protein>
<name>UNG_TOLAT</name>
<reference key="1">
    <citation type="submission" date="2009-05" db="EMBL/GenBank/DDBJ databases">
        <title>Complete sequence of Tolumonas auensis DSM 9187.</title>
        <authorList>
            <consortium name="US DOE Joint Genome Institute"/>
            <person name="Lucas S."/>
            <person name="Copeland A."/>
            <person name="Lapidus A."/>
            <person name="Glavina del Rio T."/>
            <person name="Tice H."/>
            <person name="Bruce D."/>
            <person name="Goodwin L."/>
            <person name="Pitluck S."/>
            <person name="Chertkov O."/>
            <person name="Brettin T."/>
            <person name="Detter J.C."/>
            <person name="Han C."/>
            <person name="Larimer F."/>
            <person name="Land M."/>
            <person name="Hauser L."/>
            <person name="Kyrpides N."/>
            <person name="Mikhailova N."/>
            <person name="Spring S."/>
            <person name="Beller H."/>
        </authorList>
    </citation>
    <scope>NUCLEOTIDE SEQUENCE [LARGE SCALE GENOMIC DNA]</scope>
    <source>
        <strain>DSM 9187 / NBRC 110442 / TA 4</strain>
    </source>
</reference>
<proteinExistence type="inferred from homology"/>
<evidence type="ECO:0000255" key="1">
    <source>
        <dbReference type="HAMAP-Rule" id="MF_00148"/>
    </source>
</evidence>